<dbReference type="EC" id="4.3.2.9" evidence="1"/>
<dbReference type="EMBL" id="BA000050">
    <property type="protein sequence ID" value="BAE56593.1"/>
    <property type="molecule type" value="Genomic_DNA"/>
</dbReference>
<dbReference type="RefSeq" id="XP_001818595.1">
    <property type="nucleotide sequence ID" value="XM_001818543.1"/>
</dbReference>
<dbReference type="SMR" id="Q2UPC2"/>
<dbReference type="EnsemblFungi" id="BAE56593">
    <property type="protein sequence ID" value="BAE56593"/>
    <property type="gene ID" value="AO090001000030"/>
</dbReference>
<dbReference type="GeneID" id="5990566"/>
<dbReference type="KEGG" id="aor:AO090001000030"/>
<dbReference type="VEuPathDB" id="FungiDB:AO090001000030"/>
<dbReference type="HOGENOM" id="CLU_030506_1_0_1"/>
<dbReference type="OMA" id="HDTIWAG"/>
<dbReference type="OrthoDB" id="48788at5052"/>
<dbReference type="Proteomes" id="UP000006564">
    <property type="component" value="Chromosome 2"/>
</dbReference>
<dbReference type="GO" id="GO:0003839">
    <property type="term" value="F:gamma-glutamylcyclotransferase activity"/>
    <property type="evidence" value="ECO:0007669"/>
    <property type="project" value="UniProtKB-EC"/>
</dbReference>
<dbReference type="Gene3D" id="3.10.490.10">
    <property type="entry name" value="Gamma-glutamyl cyclotransferase-like"/>
    <property type="match status" value="1"/>
</dbReference>
<dbReference type="InterPro" id="IPR017939">
    <property type="entry name" value="G-Glutamylcylcotransferase"/>
</dbReference>
<dbReference type="PANTHER" id="PTHR12935">
    <property type="entry name" value="GAMMA-GLUTAMYLCYCLOTRANSFERASE"/>
    <property type="match status" value="1"/>
</dbReference>
<dbReference type="PANTHER" id="PTHR12935:SF0">
    <property type="entry name" value="GAMMA-GLUTAMYLCYCLOTRANSFERASE"/>
    <property type="match status" value="1"/>
</dbReference>
<keyword id="KW-0456">Lyase</keyword>
<keyword id="KW-1185">Reference proteome</keyword>
<evidence type="ECO:0000250" key="1">
    <source>
        <dbReference type="UniProtKB" id="E9R9Y3"/>
    </source>
</evidence>
<evidence type="ECO:0000269" key="2">
    <source>
    </source>
</evidence>
<evidence type="ECO:0000303" key="3">
    <source>
    </source>
</evidence>
<evidence type="ECO:0000305" key="4"/>
<evidence type="ECO:0000305" key="5">
    <source>
    </source>
</evidence>
<name>ACLK_ASPOR</name>
<comment type="function">
    <text evidence="2">Gamma-glutamyl cyclotransferase; part of the gene cluster that mediates the biosynthesis of aspirochlorine (or antibiotic A30641), an unusual halogenated spiro compound with distinctive antifungal properties due to selective inhibition of protein biosynthesis, and which is also active against bacteria, viruses, and murine tumor cells (PubMed:25302411). The non-ribosomal peptide synthetase (NRPS) aclP is responsible the formation of the diketopiperazine (DKP) core from the condensation of 2 phenylalanine residues (PubMed:25302411). One Phe residue is tailored into chlorotyrosine by hydroxylation and chlorination, whereas the second Phe undergoes an unprecedented C-C bond cleavage to be converted into glycine (PubMed:25302411). After formation of the DKP, sulfur is incorporated into the DKP by conjugation with glutathione by aclG, followed by its stepwise degradation to the thiol by aclI, aclJ and aclK, and the dithiol oxidation by aclT (PubMed:25302411). In addition, oxygenases (aclB, aclC, aclL and aclO) and O-methyltransferases (aclM and aclU) act as tailoring enzymes to produce the intermediate dechloroaspirochlorine (PubMed:25302411). Ultimately, chlorination of dechloroaspirochlorine by the halogenase aclH is the last step in the aspirochlorine pathway (PubMed:25302411).</text>
</comment>
<comment type="catalytic activity">
    <reaction evidence="1">
        <text>an alpha-(gamma-L-glutamyl)-L-amino acid = 5-oxo-L-proline + an L-alpha-amino acid</text>
        <dbReference type="Rhea" id="RHEA:20505"/>
        <dbReference type="ChEBI" id="CHEBI:58402"/>
        <dbReference type="ChEBI" id="CHEBI:59869"/>
        <dbReference type="ChEBI" id="CHEBI:71304"/>
        <dbReference type="EC" id="4.3.2.9"/>
    </reaction>
</comment>
<comment type="pathway">
    <text evidence="5">Mycotoxin biosynthesis.</text>
</comment>
<comment type="similarity">
    <text evidence="4">Belongs to the class-I pyridoxal-phosphate-dependent aminotransferase family.</text>
</comment>
<reference key="1">
    <citation type="journal article" date="2005" name="Nature">
        <title>Genome sequencing and analysis of Aspergillus oryzae.</title>
        <authorList>
            <person name="Machida M."/>
            <person name="Asai K."/>
            <person name="Sano M."/>
            <person name="Tanaka T."/>
            <person name="Kumagai T."/>
            <person name="Terai G."/>
            <person name="Kusumoto K."/>
            <person name="Arima T."/>
            <person name="Akita O."/>
            <person name="Kashiwagi Y."/>
            <person name="Abe K."/>
            <person name="Gomi K."/>
            <person name="Horiuchi H."/>
            <person name="Kitamoto K."/>
            <person name="Kobayashi T."/>
            <person name="Takeuchi M."/>
            <person name="Denning D.W."/>
            <person name="Galagan J.E."/>
            <person name="Nierman W.C."/>
            <person name="Yu J."/>
            <person name="Archer D.B."/>
            <person name="Bennett J.W."/>
            <person name="Bhatnagar D."/>
            <person name="Cleveland T.E."/>
            <person name="Fedorova N.D."/>
            <person name="Gotoh O."/>
            <person name="Horikawa H."/>
            <person name="Hosoyama A."/>
            <person name="Ichinomiya M."/>
            <person name="Igarashi R."/>
            <person name="Iwashita K."/>
            <person name="Juvvadi P.R."/>
            <person name="Kato M."/>
            <person name="Kato Y."/>
            <person name="Kin T."/>
            <person name="Kokubun A."/>
            <person name="Maeda H."/>
            <person name="Maeyama N."/>
            <person name="Maruyama J."/>
            <person name="Nagasaki H."/>
            <person name="Nakajima T."/>
            <person name="Oda K."/>
            <person name="Okada K."/>
            <person name="Paulsen I."/>
            <person name="Sakamoto K."/>
            <person name="Sawano T."/>
            <person name="Takahashi M."/>
            <person name="Takase K."/>
            <person name="Terabayashi Y."/>
            <person name="Wortman J.R."/>
            <person name="Yamada O."/>
            <person name="Yamagata Y."/>
            <person name="Anazawa H."/>
            <person name="Hata Y."/>
            <person name="Koide Y."/>
            <person name="Komori T."/>
            <person name="Koyama Y."/>
            <person name="Minetoki T."/>
            <person name="Suharnan S."/>
            <person name="Tanaka A."/>
            <person name="Isono K."/>
            <person name="Kuhara S."/>
            <person name="Ogasawara N."/>
            <person name="Kikuchi H."/>
        </authorList>
    </citation>
    <scope>NUCLEOTIDE SEQUENCE [LARGE SCALE GENOMIC DNA]</scope>
    <source>
        <strain>ATCC 42149 / RIB 40</strain>
    </source>
</reference>
<reference key="2">
    <citation type="journal article" date="2014" name="Angew. Chem. Int. Ed.">
        <title>Biosynthesis of the halogenated mycotoxin aspirochlorine in koji mold involves a cryptic amino acid conversion.</title>
        <authorList>
            <person name="Chankhamjon P."/>
            <person name="Boettger-Schmidt D."/>
            <person name="Scherlach K."/>
            <person name="Urbansky B."/>
            <person name="Lackner G."/>
            <person name="Kalb D."/>
            <person name="Dahse H.M."/>
            <person name="Hoffmeister D."/>
            <person name="Hertweck C."/>
        </authorList>
    </citation>
    <scope>FUNCTION</scope>
    <scope>PATHWAY</scope>
</reference>
<protein>
    <recommendedName>
        <fullName evidence="3">Gamma-glutamyl cyclotransferase aclK</fullName>
        <shortName evidence="4">GGCT aclK</shortName>
        <ecNumber evidence="1">4.3.2.9</ecNumber>
    </recommendedName>
    <alternativeName>
        <fullName evidence="3">Aspirochlorine biosynthesis protein K</fullName>
    </alternativeName>
</protein>
<accession>Q2UPC2</accession>
<sequence length="273" mass="30442">MASSLELPKFEPDRDRLVWYLAYGSNLSSQTFREDRQITPQAAVTITVPGWRLTLSSAGFPYREPSFASIVNVGSAGPTDEKHDGPCELPLHGTAYLITWSQWIKIVASEGGGIVYKEALLRGQPIQPQDQQRWGAELSVLTLVSTMERWPEPRPSQRYMGLILDGARAADFPASYIAQIRHKHPCYQPPSTTWERIGATLFLGFWTPVLTLLSLLTHAAARAGPGDDGHVPEGVRALVRFAMFTMWWVHDLIWSRIWGRGDGLFPGAMQLNG</sequence>
<proteinExistence type="inferred from homology"/>
<organism>
    <name type="scientific">Aspergillus oryzae (strain ATCC 42149 / RIB 40)</name>
    <name type="common">Yellow koji mold</name>
    <dbReference type="NCBI Taxonomy" id="510516"/>
    <lineage>
        <taxon>Eukaryota</taxon>
        <taxon>Fungi</taxon>
        <taxon>Dikarya</taxon>
        <taxon>Ascomycota</taxon>
        <taxon>Pezizomycotina</taxon>
        <taxon>Eurotiomycetes</taxon>
        <taxon>Eurotiomycetidae</taxon>
        <taxon>Eurotiales</taxon>
        <taxon>Aspergillaceae</taxon>
        <taxon>Aspergillus</taxon>
        <taxon>Aspergillus subgen. Circumdati</taxon>
    </lineage>
</organism>
<gene>
    <name evidence="3" type="primary">aclK</name>
    <name type="ORF">AO090001000030</name>
</gene>
<feature type="chain" id="PRO_0000441204" description="Gamma-glutamyl cyclotransferase aclK">
    <location>
        <begin position="1"/>
        <end position="273"/>
    </location>
</feature>